<feature type="chain" id="PRO_0000056321" description="Uncharacterized RING finger protein C02B8.6">
    <location>
        <begin position="1"/>
        <end position="347"/>
    </location>
</feature>
<feature type="domain" description="WWE" evidence="2">
    <location>
        <begin position="244"/>
        <end position="321"/>
    </location>
</feature>
<feature type="zinc finger region" description="RING-type" evidence="1">
    <location>
        <begin position="5"/>
        <end position="44"/>
    </location>
</feature>
<keyword id="KW-0479">Metal-binding</keyword>
<keyword id="KW-1185">Reference proteome</keyword>
<keyword id="KW-0862">Zinc</keyword>
<keyword id="KW-0863">Zinc-finger</keyword>
<organism>
    <name type="scientific">Caenorhabditis elegans</name>
    <dbReference type="NCBI Taxonomy" id="6239"/>
    <lineage>
        <taxon>Eukaryota</taxon>
        <taxon>Metazoa</taxon>
        <taxon>Ecdysozoa</taxon>
        <taxon>Nematoda</taxon>
        <taxon>Chromadorea</taxon>
        <taxon>Rhabditida</taxon>
        <taxon>Rhabditina</taxon>
        <taxon>Rhabditomorpha</taxon>
        <taxon>Rhabditoidea</taxon>
        <taxon>Rhabditidae</taxon>
        <taxon>Peloderinae</taxon>
        <taxon>Caenorhabditis</taxon>
    </lineage>
</organism>
<accession>Q11096</accession>
<gene>
    <name type="ORF">C02B8.6</name>
</gene>
<dbReference type="EMBL" id="FO080272">
    <property type="protein sequence ID" value="CCD62507.1"/>
    <property type="molecule type" value="Genomic_DNA"/>
</dbReference>
<dbReference type="PIR" id="T15375">
    <property type="entry name" value="T15375"/>
</dbReference>
<dbReference type="RefSeq" id="NP_509369.2">
    <property type="nucleotide sequence ID" value="NM_076968.6"/>
</dbReference>
<dbReference type="SMR" id="Q11096"/>
<dbReference type="BioGRID" id="45993">
    <property type="interactions" value="1"/>
</dbReference>
<dbReference type="FunCoup" id="Q11096">
    <property type="interactions" value="331"/>
</dbReference>
<dbReference type="STRING" id="6239.C02B8.6.1"/>
<dbReference type="PaxDb" id="6239-C02B8.6"/>
<dbReference type="PeptideAtlas" id="Q11096"/>
<dbReference type="EnsemblMetazoa" id="C02B8.6.1">
    <property type="protein sequence ID" value="C02B8.6.1"/>
    <property type="gene ID" value="WBGene00015324"/>
</dbReference>
<dbReference type="GeneID" id="181070"/>
<dbReference type="KEGG" id="cel:CELE_C02B8.6"/>
<dbReference type="UCSC" id="C02B8.6">
    <property type="organism name" value="c. elegans"/>
</dbReference>
<dbReference type="AGR" id="WB:WBGene00015324"/>
<dbReference type="CTD" id="181070"/>
<dbReference type="WormBase" id="C02B8.6">
    <property type="protein sequence ID" value="CE29656"/>
    <property type="gene ID" value="WBGene00015324"/>
</dbReference>
<dbReference type="eggNOG" id="KOG0824">
    <property type="taxonomic scope" value="Eukaryota"/>
</dbReference>
<dbReference type="GeneTree" id="ENSGT00390000000358"/>
<dbReference type="HOGENOM" id="CLU_799823_0_0_1"/>
<dbReference type="InParanoid" id="Q11096"/>
<dbReference type="OrthoDB" id="10065815at2759"/>
<dbReference type="PRO" id="PR:Q11096"/>
<dbReference type="Proteomes" id="UP000001940">
    <property type="component" value="Chromosome X"/>
</dbReference>
<dbReference type="Bgee" id="WBGene00015324">
    <property type="expression patterns" value="Expressed in pharyngeal muscle cell (C elegans) and 4 other cell types or tissues"/>
</dbReference>
<dbReference type="GO" id="GO:0005737">
    <property type="term" value="C:cytoplasm"/>
    <property type="evidence" value="ECO:0000318"/>
    <property type="project" value="GO_Central"/>
</dbReference>
<dbReference type="GO" id="GO:0005634">
    <property type="term" value="C:nucleus"/>
    <property type="evidence" value="ECO:0000318"/>
    <property type="project" value="GO_Central"/>
</dbReference>
<dbReference type="GO" id="GO:0072572">
    <property type="term" value="F:poly-ADP-D-ribose binding"/>
    <property type="evidence" value="ECO:0000318"/>
    <property type="project" value="GO_Central"/>
</dbReference>
<dbReference type="GO" id="GO:0061630">
    <property type="term" value="F:ubiquitin protein ligase activity"/>
    <property type="evidence" value="ECO:0007669"/>
    <property type="project" value="InterPro"/>
</dbReference>
<dbReference type="GO" id="GO:0004842">
    <property type="term" value="F:ubiquitin-protein transferase activity"/>
    <property type="evidence" value="ECO:0000318"/>
    <property type="project" value="GO_Central"/>
</dbReference>
<dbReference type="GO" id="GO:0008270">
    <property type="term" value="F:zinc ion binding"/>
    <property type="evidence" value="ECO:0007669"/>
    <property type="project" value="UniProtKB-KW"/>
</dbReference>
<dbReference type="GO" id="GO:0006511">
    <property type="term" value="P:ubiquitin-dependent protein catabolic process"/>
    <property type="evidence" value="ECO:0000318"/>
    <property type="project" value="GO_Central"/>
</dbReference>
<dbReference type="GO" id="GO:0016055">
    <property type="term" value="P:Wnt signaling pathway"/>
    <property type="evidence" value="ECO:0007669"/>
    <property type="project" value="InterPro"/>
</dbReference>
<dbReference type="FunFam" id="3.30.720.50:FF:000010">
    <property type="entry name" value="Zinc finger protein"/>
    <property type="match status" value="1"/>
</dbReference>
<dbReference type="Gene3D" id="3.30.720.50">
    <property type="match status" value="1"/>
</dbReference>
<dbReference type="Gene3D" id="3.30.40.10">
    <property type="entry name" value="Zinc/RING finger domain, C3HC4 (zinc finger)"/>
    <property type="match status" value="1"/>
</dbReference>
<dbReference type="InterPro" id="IPR033509">
    <property type="entry name" value="RNF146"/>
</dbReference>
<dbReference type="InterPro" id="IPR018123">
    <property type="entry name" value="WWE-dom_subgr"/>
</dbReference>
<dbReference type="InterPro" id="IPR004170">
    <property type="entry name" value="WWE_dom"/>
</dbReference>
<dbReference type="InterPro" id="IPR037197">
    <property type="entry name" value="WWE_dom_sf"/>
</dbReference>
<dbReference type="InterPro" id="IPR018957">
    <property type="entry name" value="Znf_C3HC4_RING-type"/>
</dbReference>
<dbReference type="InterPro" id="IPR001841">
    <property type="entry name" value="Znf_RING"/>
</dbReference>
<dbReference type="InterPro" id="IPR013083">
    <property type="entry name" value="Znf_RING/FYVE/PHD"/>
</dbReference>
<dbReference type="InterPro" id="IPR017907">
    <property type="entry name" value="Znf_RING_CS"/>
</dbReference>
<dbReference type="PANTHER" id="PTHR13417">
    <property type="entry name" value="E3 UBIQUITIN-PROTEIN LIGASE RNF146"/>
    <property type="match status" value="1"/>
</dbReference>
<dbReference type="PANTHER" id="PTHR13417:SF2">
    <property type="entry name" value="E3 UBIQUITIN-PROTEIN LIGASE RNF146"/>
    <property type="match status" value="1"/>
</dbReference>
<dbReference type="Pfam" id="PF02825">
    <property type="entry name" value="WWE"/>
    <property type="match status" value="1"/>
</dbReference>
<dbReference type="Pfam" id="PF00097">
    <property type="entry name" value="zf-C3HC4"/>
    <property type="match status" value="1"/>
</dbReference>
<dbReference type="SMART" id="SM00184">
    <property type="entry name" value="RING"/>
    <property type="match status" value="1"/>
</dbReference>
<dbReference type="SMART" id="SM00678">
    <property type="entry name" value="WWE"/>
    <property type="match status" value="1"/>
</dbReference>
<dbReference type="SUPFAM" id="SSF57850">
    <property type="entry name" value="RING/U-box"/>
    <property type="match status" value="1"/>
</dbReference>
<dbReference type="SUPFAM" id="SSF117839">
    <property type="entry name" value="WWE domain"/>
    <property type="match status" value="1"/>
</dbReference>
<dbReference type="PROSITE" id="PS50918">
    <property type="entry name" value="WWE"/>
    <property type="match status" value="1"/>
</dbReference>
<dbReference type="PROSITE" id="PS00518">
    <property type="entry name" value="ZF_RING_1"/>
    <property type="match status" value="1"/>
</dbReference>
<dbReference type="PROSITE" id="PS50089">
    <property type="entry name" value="ZF_RING_2"/>
    <property type="match status" value="1"/>
</dbReference>
<proteinExistence type="predicted"/>
<protein>
    <recommendedName>
        <fullName>Uncharacterized RING finger protein C02B8.6</fullName>
    </recommendedName>
</protein>
<sequence length="347" mass="39377">MTDICTICHNTPNRPVRLDCNHEFCYICIKGSIQNDMLNCAVCRRPFDSSIILNLSAQVCLKGDAPRDVDDDEEEVQDEEIDVKPDVNLLRAAMNANQNGNRELVAAAPHMNNNGNFHNAQGNYQVPTTSQGMVNQFGWPQFQAHSDFPYTLGYWGNQFPPFWNNAARNWGDVQQAANPVFAGNNQFLGNTQYNVFPPGQMGLPLPTTNIKMDIRDDEQNSVGGQQGMQTPTAGSDVPTAAQYNVQANFNVARVKFFWLYSSRGDGWWRFDQRCEKDIEDEFLANKPNMEMYLFGKPYILDFVAMRQWQKGNLDAWRQIKRVTSSEFDMHNVKGIAGCHVPNVWTVD</sequence>
<reference key="1">
    <citation type="journal article" date="1998" name="Science">
        <title>Genome sequence of the nematode C. elegans: a platform for investigating biology.</title>
        <authorList>
            <consortium name="The C. elegans sequencing consortium"/>
        </authorList>
    </citation>
    <scope>NUCLEOTIDE SEQUENCE [LARGE SCALE GENOMIC DNA]</scope>
    <source>
        <strain>Bristol N2</strain>
    </source>
</reference>
<name>YWZ6_CAEEL</name>
<evidence type="ECO:0000255" key="1">
    <source>
        <dbReference type="PROSITE-ProRule" id="PRU00175"/>
    </source>
</evidence>
<evidence type="ECO:0000255" key="2">
    <source>
        <dbReference type="PROSITE-ProRule" id="PRU00248"/>
    </source>
</evidence>